<feature type="chain" id="PRO_1000010846" description="Elongation factor P">
    <location>
        <begin position="1"/>
        <end position="186"/>
    </location>
</feature>
<proteinExistence type="inferred from homology"/>
<accession>A6WN92</accession>
<protein>
    <recommendedName>
        <fullName evidence="1">Elongation factor P</fullName>
        <shortName evidence="1">EF-P</shortName>
    </recommendedName>
</protein>
<name>EFP_SHEB8</name>
<reference key="1">
    <citation type="submission" date="2007-07" db="EMBL/GenBank/DDBJ databases">
        <title>Complete sequence of chromosome of Shewanella baltica OS185.</title>
        <authorList>
            <consortium name="US DOE Joint Genome Institute"/>
            <person name="Copeland A."/>
            <person name="Lucas S."/>
            <person name="Lapidus A."/>
            <person name="Barry K."/>
            <person name="Glavina del Rio T."/>
            <person name="Dalin E."/>
            <person name="Tice H."/>
            <person name="Pitluck S."/>
            <person name="Sims D."/>
            <person name="Brettin T."/>
            <person name="Bruce D."/>
            <person name="Detter J.C."/>
            <person name="Han C."/>
            <person name="Schmutz J."/>
            <person name="Larimer F."/>
            <person name="Land M."/>
            <person name="Hauser L."/>
            <person name="Kyrpides N."/>
            <person name="Mikhailova N."/>
            <person name="Brettar I."/>
            <person name="Rodrigues J."/>
            <person name="Konstantinidis K."/>
            <person name="Tiedje J."/>
            <person name="Richardson P."/>
        </authorList>
    </citation>
    <scope>NUCLEOTIDE SEQUENCE [LARGE SCALE GENOMIC DNA]</scope>
    <source>
        <strain>OS185</strain>
    </source>
</reference>
<evidence type="ECO:0000255" key="1">
    <source>
        <dbReference type="HAMAP-Rule" id="MF_00141"/>
    </source>
</evidence>
<comment type="function">
    <text evidence="1">Involved in peptide bond synthesis. Stimulates efficient translation and peptide-bond synthesis on native or reconstituted 70S ribosomes in vitro. Probably functions indirectly by altering the affinity of the ribosome for aminoacyl-tRNA, thus increasing their reactivity as acceptors for peptidyl transferase.</text>
</comment>
<comment type="pathway">
    <text evidence="1">Protein biosynthesis; polypeptide chain elongation.</text>
</comment>
<comment type="subcellular location">
    <subcellularLocation>
        <location evidence="1">Cytoplasm</location>
    </subcellularLocation>
</comment>
<comment type="similarity">
    <text evidence="1">Belongs to the elongation factor P family.</text>
</comment>
<sequence>MKTAHEIRPGNVIMLDGSPWVVQKTETTRSGRNAAIVKLKLKNLLLNSGTETTFKGEDKLEDIILDRLDCTYSYFADPMFVFMDAEYNQYDVEAENLGDAAAYIVDGMEETCQVTFYDGKAISVEMPTTIVREVIYTEPSARGDTSGKVMKPATITGGGTVTVADFVKVGDKIEIDTRTGEFKKRV</sequence>
<gene>
    <name evidence="1" type="primary">efp</name>
    <name type="ordered locus">Shew185_2139</name>
</gene>
<dbReference type="EMBL" id="CP000753">
    <property type="protein sequence ID" value="ABS08281.1"/>
    <property type="molecule type" value="Genomic_DNA"/>
</dbReference>
<dbReference type="RefSeq" id="WP_006081573.1">
    <property type="nucleotide sequence ID" value="NC_009665.1"/>
</dbReference>
<dbReference type="SMR" id="A6WN92"/>
<dbReference type="GeneID" id="11772332"/>
<dbReference type="KEGG" id="sbm:Shew185_2139"/>
<dbReference type="HOGENOM" id="CLU_074944_2_1_6"/>
<dbReference type="UniPathway" id="UPA00345"/>
<dbReference type="GO" id="GO:0005737">
    <property type="term" value="C:cytoplasm"/>
    <property type="evidence" value="ECO:0007669"/>
    <property type="project" value="UniProtKB-SubCell"/>
</dbReference>
<dbReference type="GO" id="GO:0003746">
    <property type="term" value="F:translation elongation factor activity"/>
    <property type="evidence" value="ECO:0007669"/>
    <property type="project" value="UniProtKB-UniRule"/>
</dbReference>
<dbReference type="GO" id="GO:0043043">
    <property type="term" value="P:peptide biosynthetic process"/>
    <property type="evidence" value="ECO:0007669"/>
    <property type="project" value="InterPro"/>
</dbReference>
<dbReference type="CDD" id="cd04470">
    <property type="entry name" value="S1_EF-P_repeat_1"/>
    <property type="match status" value="1"/>
</dbReference>
<dbReference type="CDD" id="cd05794">
    <property type="entry name" value="S1_EF-P_repeat_2"/>
    <property type="match status" value="1"/>
</dbReference>
<dbReference type="FunFam" id="2.30.30.30:FF:000003">
    <property type="entry name" value="Elongation factor P"/>
    <property type="match status" value="1"/>
</dbReference>
<dbReference type="FunFam" id="2.40.50.140:FF:000004">
    <property type="entry name" value="Elongation factor P"/>
    <property type="match status" value="1"/>
</dbReference>
<dbReference type="FunFam" id="2.40.50.140:FF:000009">
    <property type="entry name" value="Elongation factor P"/>
    <property type="match status" value="1"/>
</dbReference>
<dbReference type="Gene3D" id="2.30.30.30">
    <property type="match status" value="1"/>
</dbReference>
<dbReference type="Gene3D" id="2.40.50.140">
    <property type="entry name" value="Nucleic acid-binding proteins"/>
    <property type="match status" value="2"/>
</dbReference>
<dbReference type="HAMAP" id="MF_00141">
    <property type="entry name" value="EF_P"/>
    <property type="match status" value="1"/>
</dbReference>
<dbReference type="InterPro" id="IPR015365">
    <property type="entry name" value="Elong-fact-P_C"/>
</dbReference>
<dbReference type="InterPro" id="IPR012340">
    <property type="entry name" value="NA-bd_OB-fold"/>
</dbReference>
<dbReference type="InterPro" id="IPR014722">
    <property type="entry name" value="Rib_uL2_dom2"/>
</dbReference>
<dbReference type="InterPro" id="IPR020599">
    <property type="entry name" value="Transl_elong_fac_P/YeiP"/>
</dbReference>
<dbReference type="InterPro" id="IPR013185">
    <property type="entry name" value="Transl_elong_KOW-like"/>
</dbReference>
<dbReference type="InterPro" id="IPR001059">
    <property type="entry name" value="Transl_elong_P/YeiP_cen"/>
</dbReference>
<dbReference type="InterPro" id="IPR011768">
    <property type="entry name" value="Transl_elongation_fac_P"/>
</dbReference>
<dbReference type="InterPro" id="IPR008991">
    <property type="entry name" value="Translation_prot_SH3-like_sf"/>
</dbReference>
<dbReference type="NCBIfam" id="TIGR00038">
    <property type="entry name" value="efp"/>
    <property type="match status" value="1"/>
</dbReference>
<dbReference type="NCBIfam" id="NF001810">
    <property type="entry name" value="PRK00529.1"/>
    <property type="match status" value="1"/>
</dbReference>
<dbReference type="PANTHER" id="PTHR30053">
    <property type="entry name" value="ELONGATION FACTOR P"/>
    <property type="match status" value="1"/>
</dbReference>
<dbReference type="PANTHER" id="PTHR30053:SF12">
    <property type="entry name" value="ELONGATION FACTOR P (EF-P) FAMILY PROTEIN"/>
    <property type="match status" value="1"/>
</dbReference>
<dbReference type="Pfam" id="PF01132">
    <property type="entry name" value="EFP"/>
    <property type="match status" value="1"/>
</dbReference>
<dbReference type="Pfam" id="PF08207">
    <property type="entry name" value="EFP_N"/>
    <property type="match status" value="1"/>
</dbReference>
<dbReference type="Pfam" id="PF09285">
    <property type="entry name" value="Elong-fact-P_C"/>
    <property type="match status" value="1"/>
</dbReference>
<dbReference type="PIRSF" id="PIRSF005901">
    <property type="entry name" value="EF-P"/>
    <property type="match status" value="1"/>
</dbReference>
<dbReference type="SMART" id="SM01185">
    <property type="entry name" value="EFP"/>
    <property type="match status" value="1"/>
</dbReference>
<dbReference type="SMART" id="SM00841">
    <property type="entry name" value="Elong-fact-P_C"/>
    <property type="match status" value="1"/>
</dbReference>
<dbReference type="SUPFAM" id="SSF50249">
    <property type="entry name" value="Nucleic acid-binding proteins"/>
    <property type="match status" value="2"/>
</dbReference>
<dbReference type="SUPFAM" id="SSF50104">
    <property type="entry name" value="Translation proteins SH3-like domain"/>
    <property type="match status" value="1"/>
</dbReference>
<organism>
    <name type="scientific">Shewanella baltica (strain OS185)</name>
    <dbReference type="NCBI Taxonomy" id="402882"/>
    <lineage>
        <taxon>Bacteria</taxon>
        <taxon>Pseudomonadati</taxon>
        <taxon>Pseudomonadota</taxon>
        <taxon>Gammaproteobacteria</taxon>
        <taxon>Alteromonadales</taxon>
        <taxon>Shewanellaceae</taxon>
        <taxon>Shewanella</taxon>
    </lineage>
</organism>
<keyword id="KW-0963">Cytoplasm</keyword>
<keyword id="KW-0251">Elongation factor</keyword>
<keyword id="KW-0648">Protein biosynthesis</keyword>